<proteinExistence type="inferred from homology"/>
<keyword id="KW-0012">Acyltransferase</keyword>
<keyword id="KW-0133">Cell shape</keyword>
<keyword id="KW-0961">Cell wall biogenesis/degradation</keyword>
<keyword id="KW-0963">Cytoplasm</keyword>
<keyword id="KW-0460">Magnesium</keyword>
<keyword id="KW-0479">Metal-binding</keyword>
<keyword id="KW-0511">Multifunctional enzyme</keyword>
<keyword id="KW-0548">Nucleotidyltransferase</keyword>
<keyword id="KW-0573">Peptidoglycan synthesis</keyword>
<keyword id="KW-1185">Reference proteome</keyword>
<keyword id="KW-0677">Repeat</keyword>
<keyword id="KW-0808">Transferase</keyword>
<reference key="1">
    <citation type="submission" date="2007-07" db="EMBL/GenBank/DDBJ databases">
        <title>Complete genome sequence of Campylobacter hominis ATCC BAA-381, a commensal isolated from the human gastrointestinal tract.</title>
        <authorList>
            <person name="Fouts D.E."/>
            <person name="Mongodin E.F."/>
            <person name="Puiu D."/>
            <person name="Sebastian Y."/>
            <person name="Miller W.G."/>
            <person name="Mandrell R.E."/>
            <person name="Nelson K.E."/>
        </authorList>
    </citation>
    <scope>NUCLEOTIDE SEQUENCE [LARGE SCALE GENOMIC DNA]</scope>
    <source>
        <strain>ATCC BAA-381 / DSM 21671 / CCUG 45161 / LMG 19568 / NCTC 13146 / CH001A</strain>
    </source>
</reference>
<protein>
    <recommendedName>
        <fullName evidence="1">Bifunctional protein GlmU</fullName>
    </recommendedName>
    <domain>
        <recommendedName>
            <fullName evidence="1">UDP-N-acetylglucosamine pyrophosphorylase</fullName>
            <ecNumber evidence="1">2.7.7.23</ecNumber>
        </recommendedName>
        <alternativeName>
            <fullName evidence="1">N-acetylglucosamine-1-phosphate uridyltransferase</fullName>
        </alternativeName>
    </domain>
    <domain>
        <recommendedName>
            <fullName evidence="1">Glucosamine-1-phosphate N-acetyltransferase</fullName>
            <ecNumber evidence="1">2.3.1.157</ecNumber>
        </recommendedName>
    </domain>
</protein>
<name>GLMU_CAMHC</name>
<organism>
    <name type="scientific">Campylobacter hominis (strain ATCC BAA-381 / DSM 21671 / CCUG 45161 / LMG 19568 / NCTC 13146 / CH001A)</name>
    <dbReference type="NCBI Taxonomy" id="360107"/>
    <lineage>
        <taxon>Bacteria</taxon>
        <taxon>Pseudomonadati</taxon>
        <taxon>Campylobacterota</taxon>
        <taxon>Epsilonproteobacteria</taxon>
        <taxon>Campylobacterales</taxon>
        <taxon>Campylobacteraceae</taxon>
        <taxon>Campylobacter</taxon>
    </lineage>
</organism>
<evidence type="ECO:0000255" key="1">
    <source>
        <dbReference type="HAMAP-Rule" id="MF_01631"/>
    </source>
</evidence>
<gene>
    <name evidence="1" type="primary">glmU</name>
    <name type="ordered locus">CHAB381_0968</name>
</gene>
<comment type="function">
    <text evidence="1">Catalyzes the last two sequential reactions in the de novo biosynthetic pathway for UDP-N-acetylglucosamine (UDP-GlcNAc). The C-terminal domain catalyzes the transfer of acetyl group from acetyl coenzyme A to glucosamine-1-phosphate (GlcN-1-P) to produce N-acetylglucosamine-1-phosphate (GlcNAc-1-P), which is converted into UDP-GlcNAc by the transfer of uridine 5-monophosphate (from uridine 5-triphosphate), a reaction catalyzed by the N-terminal domain.</text>
</comment>
<comment type="catalytic activity">
    <reaction evidence="1">
        <text>alpha-D-glucosamine 1-phosphate + acetyl-CoA = N-acetyl-alpha-D-glucosamine 1-phosphate + CoA + H(+)</text>
        <dbReference type="Rhea" id="RHEA:13725"/>
        <dbReference type="ChEBI" id="CHEBI:15378"/>
        <dbReference type="ChEBI" id="CHEBI:57287"/>
        <dbReference type="ChEBI" id="CHEBI:57288"/>
        <dbReference type="ChEBI" id="CHEBI:57776"/>
        <dbReference type="ChEBI" id="CHEBI:58516"/>
        <dbReference type="EC" id="2.3.1.157"/>
    </reaction>
</comment>
<comment type="catalytic activity">
    <reaction evidence="1">
        <text>N-acetyl-alpha-D-glucosamine 1-phosphate + UTP + H(+) = UDP-N-acetyl-alpha-D-glucosamine + diphosphate</text>
        <dbReference type="Rhea" id="RHEA:13509"/>
        <dbReference type="ChEBI" id="CHEBI:15378"/>
        <dbReference type="ChEBI" id="CHEBI:33019"/>
        <dbReference type="ChEBI" id="CHEBI:46398"/>
        <dbReference type="ChEBI" id="CHEBI:57705"/>
        <dbReference type="ChEBI" id="CHEBI:57776"/>
        <dbReference type="EC" id="2.7.7.23"/>
    </reaction>
</comment>
<comment type="cofactor">
    <cofactor evidence="1">
        <name>Mg(2+)</name>
        <dbReference type="ChEBI" id="CHEBI:18420"/>
    </cofactor>
    <text evidence="1">Binds 1 Mg(2+) ion per subunit.</text>
</comment>
<comment type="pathway">
    <text evidence="1">Nucleotide-sugar biosynthesis; UDP-N-acetyl-alpha-D-glucosamine biosynthesis; N-acetyl-alpha-D-glucosamine 1-phosphate from alpha-D-glucosamine 6-phosphate (route II): step 2/2.</text>
</comment>
<comment type="pathway">
    <text evidence="1">Nucleotide-sugar biosynthesis; UDP-N-acetyl-alpha-D-glucosamine biosynthesis; UDP-N-acetyl-alpha-D-glucosamine from N-acetyl-alpha-D-glucosamine 1-phosphate: step 1/1.</text>
</comment>
<comment type="pathway">
    <text evidence="1">Bacterial outer membrane biogenesis; LPS lipid A biosynthesis.</text>
</comment>
<comment type="subunit">
    <text evidence="1">Homotrimer.</text>
</comment>
<comment type="subcellular location">
    <subcellularLocation>
        <location evidence="1">Cytoplasm</location>
    </subcellularLocation>
</comment>
<comment type="similarity">
    <text evidence="1">In the N-terminal section; belongs to the N-acetylglucosamine-1-phosphate uridyltransferase family.</text>
</comment>
<comment type="similarity">
    <text evidence="1">In the C-terminal section; belongs to the transferase hexapeptide repeat family.</text>
</comment>
<feature type="chain" id="PRO_0000337715" description="Bifunctional protein GlmU">
    <location>
        <begin position="1"/>
        <end position="432"/>
    </location>
</feature>
<feature type="region of interest" description="Pyrophosphorylase" evidence="1">
    <location>
        <begin position="1"/>
        <end position="224"/>
    </location>
</feature>
<feature type="region of interest" description="Linker" evidence="1">
    <location>
        <begin position="225"/>
        <end position="245"/>
    </location>
</feature>
<feature type="region of interest" description="N-acetyltransferase" evidence="1">
    <location>
        <begin position="246"/>
        <end position="432"/>
    </location>
</feature>
<feature type="active site" description="Proton acceptor" evidence="1">
    <location>
        <position position="337"/>
    </location>
</feature>
<feature type="binding site" evidence="1">
    <location>
        <begin position="9"/>
        <end position="12"/>
    </location>
    <ligand>
        <name>UDP-N-acetyl-alpha-D-glucosamine</name>
        <dbReference type="ChEBI" id="CHEBI:57705"/>
    </ligand>
</feature>
<feature type="binding site" evidence="1">
    <location>
        <position position="23"/>
    </location>
    <ligand>
        <name>UDP-N-acetyl-alpha-D-glucosamine</name>
        <dbReference type="ChEBI" id="CHEBI:57705"/>
    </ligand>
</feature>
<feature type="binding site" evidence="1">
    <location>
        <begin position="82"/>
        <end position="83"/>
    </location>
    <ligand>
        <name>UDP-N-acetyl-alpha-D-glucosamine</name>
        <dbReference type="ChEBI" id="CHEBI:57705"/>
    </ligand>
</feature>
<feature type="binding site" evidence="1">
    <location>
        <position position="103"/>
    </location>
    <ligand>
        <name>Mg(2+)</name>
        <dbReference type="ChEBI" id="CHEBI:18420"/>
    </ligand>
</feature>
<feature type="binding site" evidence="1">
    <location>
        <position position="136"/>
    </location>
    <ligand>
        <name>UDP-N-acetyl-alpha-D-glucosamine</name>
        <dbReference type="ChEBI" id="CHEBI:57705"/>
    </ligand>
</feature>
<feature type="binding site" evidence="1">
    <location>
        <position position="150"/>
    </location>
    <ligand>
        <name>UDP-N-acetyl-alpha-D-glucosamine</name>
        <dbReference type="ChEBI" id="CHEBI:57705"/>
    </ligand>
</feature>
<feature type="binding site" evidence="1">
    <location>
        <position position="165"/>
    </location>
    <ligand>
        <name>UDP-N-acetyl-alpha-D-glucosamine</name>
        <dbReference type="ChEBI" id="CHEBI:57705"/>
    </ligand>
</feature>
<feature type="binding site" evidence="1">
    <location>
        <position position="222"/>
    </location>
    <ligand>
        <name>Mg(2+)</name>
        <dbReference type="ChEBI" id="CHEBI:18420"/>
    </ligand>
</feature>
<feature type="binding site" evidence="1">
    <location>
        <position position="222"/>
    </location>
    <ligand>
        <name>UDP-N-acetyl-alpha-D-glucosamine</name>
        <dbReference type="ChEBI" id="CHEBI:57705"/>
    </ligand>
</feature>
<feature type="binding site" evidence="1">
    <location>
        <position position="309"/>
    </location>
    <ligand>
        <name>UDP-N-acetyl-alpha-D-glucosamine</name>
        <dbReference type="ChEBI" id="CHEBI:57705"/>
    </ligand>
</feature>
<feature type="binding site" evidence="1">
    <location>
        <position position="326"/>
    </location>
    <ligand>
        <name>UDP-N-acetyl-alpha-D-glucosamine</name>
        <dbReference type="ChEBI" id="CHEBI:57705"/>
    </ligand>
</feature>
<feature type="binding site" evidence="1">
    <location>
        <position position="340"/>
    </location>
    <ligand>
        <name>UDP-N-acetyl-alpha-D-glucosamine</name>
        <dbReference type="ChEBI" id="CHEBI:57705"/>
    </ligand>
</feature>
<feature type="binding site" evidence="1">
    <location>
        <position position="351"/>
    </location>
    <ligand>
        <name>UDP-N-acetyl-alpha-D-glucosamine</name>
        <dbReference type="ChEBI" id="CHEBI:57705"/>
    </ligand>
</feature>
<feature type="binding site" evidence="1">
    <location>
        <begin position="360"/>
        <end position="361"/>
    </location>
    <ligand>
        <name>acetyl-CoA</name>
        <dbReference type="ChEBI" id="CHEBI:57288"/>
    </ligand>
</feature>
<feature type="binding site" evidence="1">
    <location>
        <position position="379"/>
    </location>
    <ligand>
        <name>acetyl-CoA</name>
        <dbReference type="ChEBI" id="CHEBI:57288"/>
    </ligand>
</feature>
<feature type="binding site" evidence="1">
    <location>
        <position position="397"/>
    </location>
    <ligand>
        <name>acetyl-CoA</name>
        <dbReference type="ChEBI" id="CHEBI:57288"/>
    </ligand>
</feature>
<feature type="binding site" evidence="1">
    <location>
        <position position="414"/>
    </location>
    <ligand>
        <name>acetyl-CoA</name>
        <dbReference type="ChEBI" id="CHEBI:57288"/>
    </ligand>
</feature>
<accession>A7I1Y8</accession>
<sequence length="432" mass="48239">MSEISVIILAAGFGTRMKSKKAKVLFELCGEPMLFHILKKAYEITDNVNVVLHYDFENIKNIVLSKFPNVKIYKQDHENFPGTAGALKNINLNSQKTLIICGDMPLVKTAELKKLCKGETDINLSVFYAENPFGYGRVINKNGKILKIVEQKDANEQELKENCVNAGAYCFKTDILKQILPLIKNENSQKEYYLTDAIEIALQKKLKCQAIEVAEENFMGINDKFALSKAETIIQNEIKENLMKNGVLMRLPESIYIDSRAKFIGECELHENVSIIGSCVIENSIIKSSSVIENSHIINSDIGPMAHIRPDCEISDTHIGNFVELKKAKVNKIKAGHLSYLGDCEIQEGTNVGCGTITCNYDGKRKYRTKIGKNVFIGSDTQLVAPVEIQDNVLIAAGSTITKNVEEGSLAISRIKQENKPGFFAKFFKEIK</sequence>
<dbReference type="EC" id="2.7.7.23" evidence="1"/>
<dbReference type="EC" id="2.3.1.157" evidence="1"/>
<dbReference type="EMBL" id="CP000776">
    <property type="protein sequence ID" value="ABS51846.1"/>
    <property type="molecule type" value="Genomic_DNA"/>
</dbReference>
<dbReference type="RefSeq" id="WP_012108822.1">
    <property type="nucleotide sequence ID" value="NC_009714.1"/>
</dbReference>
<dbReference type="SMR" id="A7I1Y8"/>
<dbReference type="STRING" id="360107.CHAB381_0968"/>
<dbReference type="KEGG" id="cha:CHAB381_0968"/>
<dbReference type="eggNOG" id="COG1207">
    <property type="taxonomic scope" value="Bacteria"/>
</dbReference>
<dbReference type="HOGENOM" id="CLU_029499_15_2_7"/>
<dbReference type="OrthoDB" id="9775031at2"/>
<dbReference type="UniPathway" id="UPA00113">
    <property type="reaction ID" value="UER00532"/>
</dbReference>
<dbReference type="UniPathway" id="UPA00113">
    <property type="reaction ID" value="UER00533"/>
</dbReference>
<dbReference type="UniPathway" id="UPA00973"/>
<dbReference type="Proteomes" id="UP000002407">
    <property type="component" value="Chromosome"/>
</dbReference>
<dbReference type="GO" id="GO:0005737">
    <property type="term" value="C:cytoplasm"/>
    <property type="evidence" value="ECO:0007669"/>
    <property type="project" value="UniProtKB-SubCell"/>
</dbReference>
<dbReference type="GO" id="GO:0016020">
    <property type="term" value="C:membrane"/>
    <property type="evidence" value="ECO:0007669"/>
    <property type="project" value="GOC"/>
</dbReference>
<dbReference type="GO" id="GO:0019134">
    <property type="term" value="F:glucosamine-1-phosphate N-acetyltransferase activity"/>
    <property type="evidence" value="ECO:0007669"/>
    <property type="project" value="UniProtKB-UniRule"/>
</dbReference>
<dbReference type="GO" id="GO:0000287">
    <property type="term" value="F:magnesium ion binding"/>
    <property type="evidence" value="ECO:0007669"/>
    <property type="project" value="UniProtKB-UniRule"/>
</dbReference>
<dbReference type="GO" id="GO:0003977">
    <property type="term" value="F:UDP-N-acetylglucosamine diphosphorylase activity"/>
    <property type="evidence" value="ECO:0007669"/>
    <property type="project" value="UniProtKB-UniRule"/>
</dbReference>
<dbReference type="GO" id="GO:0000902">
    <property type="term" value="P:cell morphogenesis"/>
    <property type="evidence" value="ECO:0007669"/>
    <property type="project" value="UniProtKB-UniRule"/>
</dbReference>
<dbReference type="GO" id="GO:0071555">
    <property type="term" value="P:cell wall organization"/>
    <property type="evidence" value="ECO:0007669"/>
    <property type="project" value="UniProtKB-KW"/>
</dbReference>
<dbReference type="GO" id="GO:0009245">
    <property type="term" value="P:lipid A biosynthetic process"/>
    <property type="evidence" value="ECO:0007669"/>
    <property type="project" value="UniProtKB-UniRule"/>
</dbReference>
<dbReference type="GO" id="GO:0009252">
    <property type="term" value="P:peptidoglycan biosynthetic process"/>
    <property type="evidence" value="ECO:0007669"/>
    <property type="project" value="UniProtKB-UniRule"/>
</dbReference>
<dbReference type="GO" id="GO:0008360">
    <property type="term" value="P:regulation of cell shape"/>
    <property type="evidence" value="ECO:0007669"/>
    <property type="project" value="UniProtKB-KW"/>
</dbReference>
<dbReference type="GO" id="GO:0006048">
    <property type="term" value="P:UDP-N-acetylglucosamine biosynthetic process"/>
    <property type="evidence" value="ECO:0007669"/>
    <property type="project" value="UniProtKB-UniPathway"/>
</dbReference>
<dbReference type="CDD" id="cd02540">
    <property type="entry name" value="GT2_GlmU_N_bac"/>
    <property type="match status" value="1"/>
</dbReference>
<dbReference type="CDD" id="cd03353">
    <property type="entry name" value="LbH_GlmU_C"/>
    <property type="match status" value="1"/>
</dbReference>
<dbReference type="Gene3D" id="2.160.10.10">
    <property type="entry name" value="Hexapeptide repeat proteins"/>
    <property type="match status" value="1"/>
</dbReference>
<dbReference type="Gene3D" id="3.90.550.10">
    <property type="entry name" value="Spore Coat Polysaccharide Biosynthesis Protein SpsA, Chain A"/>
    <property type="match status" value="1"/>
</dbReference>
<dbReference type="HAMAP" id="MF_01631">
    <property type="entry name" value="GlmU"/>
    <property type="match status" value="1"/>
</dbReference>
<dbReference type="InterPro" id="IPR005882">
    <property type="entry name" value="Bifunctional_GlmU"/>
</dbReference>
<dbReference type="InterPro" id="IPR050065">
    <property type="entry name" value="GlmU-like"/>
</dbReference>
<dbReference type="InterPro" id="IPR038009">
    <property type="entry name" value="GlmU_C_LbH"/>
</dbReference>
<dbReference type="InterPro" id="IPR001451">
    <property type="entry name" value="Hexapep"/>
</dbReference>
<dbReference type="InterPro" id="IPR025877">
    <property type="entry name" value="MobA-like_NTP_Trfase"/>
</dbReference>
<dbReference type="InterPro" id="IPR029044">
    <property type="entry name" value="Nucleotide-diphossugar_trans"/>
</dbReference>
<dbReference type="InterPro" id="IPR011004">
    <property type="entry name" value="Trimer_LpxA-like_sf"/>
</dbReference>
<dbReference type="NCBIfam" id="TIGR01173">
    <property type="entry name" value="glmU"/>
    <property type="match status" value="1"/>
</dbReference>
<dbReference type="NCBIfam" id="NF010939">
    <property type="entry name" value="PRK14359.1"/>
    <property type="match status" value="1"/>
</dbReference>
<dbReference type="PANTHER" id="PTHR43584:SF3">
    <property type="entry name" value="BIFUNCTIONAL PROTEIN GLMU"/>
    <property type="match status" value="1"/>
</dbReference>
<dbReference type="PANTHER" id="PTHR43584">
    <property type="entry name" value="NUCLEOTIDYL TRANSFERASE"/>
    <property type="match status" value="1"/>
</dbReference>
<dbReference type="Pfam" id="PF00132">
    <property type="entry name" value="Hexapep"/>
    <property type="match status" value="1"/>
</dbReference>
<dbReference type="Pfam" id="PF12804">
    <property type="entry name" value="NTP_transf_3"/>
    <property type="match status" value="1"/>
</dbReference>
<dbReference type="SUPFAM" id="SSF53448">
    <property type="entry name" value="Nucleotide-diphospho-sugar transferases"/>
    <property type="match status" value="1"/>
</dbReference>
<dbReference type="SUPFAM" id="SSF51161">
    <property type="entry name" value="Trimeric LpxA-like enzymes"/>
    <property type="match status" value="1"/>
</dbReference>